<organism>
    <name type="scientific">Methylorubrum extorquens (strain PA1)</name>
    <name type="common">Methylobacterium extorquens</name>
    <dbReference type="NCBI Taxonomy" id="419610"/>
    <lineage>
        <taxon>Bacteria</taxon>
        <taxon>Pseudomonadati</taxon>
        <taxon>Pseudomonadota</taxon>
        <taxon>Alphaproteobacteria</taxon>
        <taxon>Hyphomicrobiales</taxon>
        <taxon>Methylobacteriaceae</taxon>
        <taxon>Methylorubrum</taxon>
    </lineage>
</organism>
<protein>
    <recommendedName>
        <fullName evidence="1">Large ribosomal subunit protein bL12</fullName>
    </recommendedName>
    <alternativeName>
        <fullName evidence="2">50S ribosomal protein L7/L12</fullName>
    </alternativeName>
</protein>
<sequence>MADLAKIVEDLSSLTVLEAAELAKLLEEKWGVSAAAAVAVAAGPAAGAGAAAVEEQTEFTVVLASAGDKKIEVIKEVRAITGLGLKEAKDLVEGAPKPVKEGATKDEAEKLKAQLEKAGAKVELK</sequence>
<comment type="function">
    <text evidence="1">Forms part of the ribosomal stalk which helps the ribosome interact with GTP-bound translation factors. Is thus essential for accurate translation.</text>
</comment>
<comment type="subunit">
    <text evidence="1">Homodimer. Part of the ribosomal stalk of the 50S ribosomal subunit. Forms a multimeric L10(L12)X complex, where L10 forms an elongated spine to which 2 to 4 L12 dimers bind in a sequential fashion. Binds GTP-bound translation factors.</text>
</comment>
<comment type="similarity">
    <text evidence="1">Belongs to the bacterial ribosomal protein bL12 family.</text>
</comment>
<name>RL7_METEP</name>
<keyword id="KW-0687">Ribonucleoprotein</keyword>
<keyword id="KW-0689">Ribosomal protein</keyword>
<evidence type="ECO:0000255" key="1">
    <source>
        <dbReference type="HAMAP-Rule" id="MF_00368"/>
    </source>
</evidence>
<evidence type="ECO:0000305" key="2"/>
<reference key="1">
    <citation type="submission" date="2007-12" db="EMBL/GenBank/DDBJ databases">
        <title>Complete sequence of Methylobacterium extorquens PA1.</title>
        <authorList>
            <consortium name="US DOE Joint Genome Institute"/>
            <person name="Copeland A."/>
            <person name="Lucas S."/>
            <person name="Lapidus A."/>
            <person name="Barry K."/>
            <person name="Glavina del Rio T."/>
            <person name="Dalin E."/>
            <person name="Tice H."/>
            <person name="Pitluck S."/>
            <person name="Saunders E."/>
            <person name="Brettin T."/>
            <person name="Bruce D."/>
            <person name="Detter J.C."/>
            <person name="Han C."/>
            <person name="Schmutz J."/>
            <person name="Larimer F."/>
            <person name="Land M."/>
            <person name="Hauser L."/>
            <person name="Kyrpides N."/>
            <person name="Kim E."/>
            <person name="Marx C."/>
            <person name="Richardson P."/>
        </authorList>
    </citation>
    <scope>NUCLEOTIDE SEQUENCE [LARGE SCALE GENOMIC DNA]</scope>
    <source>
        <strain>PA1</strain>
    </source>
</reference>
<feature type="chain" id="PRO_1000121457" description="Large ribosomal subunit protein bL12">
    <location>
        <begin position="1"/>
        <end position="125"/>
    </location>
</feature>
<accession>A9W8N7</accession>
<proteinExistence type="inferred from homology"/>
<gene>
    <name evidence="1" type="primary">rplL</name>
    <name type="ordered locus">Mext_4016</name>
</gene>
<dbReference type="EMBL" id="CP000908">
    <property type="protein sequence ID" value="ABY32386.1"/>
    <property type="molecule type" value="Genomic_DNA"/>
</dbReference>
<dbReference type="RefSeq" id="WP_003597539.1">
    <property type="nucleotide sequence ID" value="NC_010172.1"/>
</dbReference>
<dbReference type="SMR" id="A9W8N7"/>
<dbReference type="GeneID" id="72991734"/>
<dbReference type="KEGG" id="mex:Mext_4016"/>
<dbReference type="eggNOG" id="COG0222">
    <property type="taxonomic scope" value="Bacteria"/>
</dbReference>
<dbReference type="HOGENOM" id="CLU_086499_3_0_5"/>
<dbReference type="BioCyc" id="MEXT419610:MEXT_RS20170-MONOMER"/>
<dbReference type="GO" id="GO:0022625">
    <property type="term" value="C:cytosolic large ribosomal subunit"/>
    <property type="evidence" value="ECO:0007669"/>
    <property type="project" value="TreeGrafter"/>
</dbReference>
<dbReference type="GO" id="GO:0003729">
    <property type="term" value="F:mRNA binding"/>
    <property type="evidence" value="ECO:0007669"/>
    <property type="project" value="TreeGrafter"/>
</dbReference>
<dbReference type="GO" id="GO:0003735">
    <property type="term" value="F:structural constituent of ribosome"/>
    <property type="evidence" value="ECO:0007669"/>
    <property type="project" value="InterPro"/>
</dbReference>
<dbReference type="GO" id="GO:0006412">
    <property type="term" value="P:translation"/>
    <property type="evidence" value="ECO:0007669"/>
    <property type="project" value="UniProtKB-UniRule"/>
</dbReference>
<dbReference type="CDD" id="cd00387">
    <property type="entry name" value="Ribosomal_L7_L12"/>
    <property type="match status" value="1"/>
</dbReference>
<dbReference type="FunFam" id="1.20.5.710:FF:000007">
    <property type="entry name" value="50S ribosomal protein L7/L12"/>
    <property type="match status" value="1"/>
</dbReference>
<dbReference type="FunFam" id="3.30.1390.10:FF:000001">
    <property type="entry name" value="50S ribosomal protein L7/L12"/>
    <property type="match status" value="1"/>
</dbReference>
<dbReference type="Gene3D" id="3.30.1390.10">
    <property type="match status" value="1"/>
</dbReference>
<dbReference type="Gene3D" id="1.20.5.710">
    <property type="entry name" value="Single helix bin"/>
    <property type="match status" value="1"/>
</dbReference>
<dbReference type="HAMAP" id="MF_00368">
    <property type="entry name" value="Ribosomal_bL12"/>
    <property type="match status" value="1"/>
</dbReference>
<dbReference type="InterPro" id="IPR000206">
    <property type="entry name" value="Ribosomal_bL12"/>
</dbReference>
<dbReference type="InterPro" id="IPR013823">
    <property type="entry name" value="Ribosomal_bL12_C"/>
</dbReference>
<dbReference type="InterPro" id="IPR014719">
    <property type="entry name" value="Ribosomal_bL12_C/ClpS-like"/>
</dbReference>
<dbReference type="InterPro" id="IPR008932">
    <property type="entry name" value="Ribosomal_bL12_oligo"/>
</dbReference>
<dbReference type="InterPro" id="IPR036235">
    <property type="entry name" value="Ribosomal_bL12_oligo_N_sf"/>
</dbReference>
<dbReference type="NCBIfam" id="TIGR00855">
    <property type="entry name" value="L12"/>
    <property type="match status" value="1"/>
</dbReference>
<dbReference type="PANTHER" id="PTHR45987">
    <property type="entry name" value="39S RIBOSOMAL PROTEIN L12"/>
    <property type="match status" value="1"/>
</dbReference>
<dbReference type="PANTHER" id="PTHR45987:SF4">
    <property type="entry name" value="LARGE RIBOSOMAL SUBUNIT PROTEIN BL12M"/>
    <property type="match status" value="1"/>
</dbReference>
<dbReference type="Pfam" id="PF00542">
    <property type="entry name" value="Ribosomal_L12"/>
    <property type="match status" value="1"/>
</dbReference>
<dbReference type="Pfam" id="PF16320">
    <property type="entry name" value="Ribosomal_L12_N"/>
    <property type="match status" value="1"/>
</dbReference>
<dbReference type="SUPFAM" id="SSF54736">
    <property type="entry name" value="ClpS-like"/>
    <property type="match status" value="1"/>
</dbReference>
<dbReference type="SUPFAM" id="SSF48300">
    <property type="entry name" value="Ribosomal protein L7/12, oligomerisation (N-terminal) domain"/>
    <property type="match status" value="1"/>
</dbReference>